<feature type="chain" id="PRO_0000387824" description="4-hydroxy-2-oxovalerate aldolase">
    <location>
        <begin position="1"/>
        <end position="343"/>
    </location>
</feature>
<feature type="domain" description="Pyruvate carboxyltransferase" evidence="1">
    <location>
        <begin position="5"/>
        <end position="256"/>
    </location>
</feature>
<feature type="active site" description="Proton acceptor" evidence="1">
    <location>
        <position position="17"/>
    </location>
</feature>
<feature type="binding site" evidence="1">
    <location>
        <begin position="13"/>
        <end position="14"/>
    </location>
    <ligand>
        <name>substrate</name>
    </ligand>
</feature>
<feature type="binding site" evidence="1">
    <location>
        <position position="14"/>
    </location>
    <ligand>
        <name>Mn(2+)</name>
        <dbReference type="ChEBI" id="CHEBI:29035"/>
    </ligand>
</feature>
<feature type="binding site" evidence="1">
    <location>
        <position position="168"/>
    </location>
    <ligand>
        <name>substrate</name>
    </ligand>
</feature>
<feature type="binding site" evidence="1">
    <location>
        <position position="195"/>
    </location>
    <ligand>
        <name>Mn(2+)</name>
        <dbReference type="ChEBI" id="CHEBI:29035"/>
    </ligand>
</feature>
<feature type="binding site" evidence="1">
    <location>
        <position position="195"/>
    </location>
    <ligand>
        <name>substrate</name>
    </ligand>
</feature>
<feature type="binding site" evidence="1">
    <location>
        <position position="197"/>
    </location>
    <ligand>
        <name>Mn(2+)</name>
        <dbReference type="ChEBI" id="CHEBI:29035"/>
    </ligand>
</feature>
<feature type="site" description="Transition state stabilizer" evidence="1">
    <location>
        <position position="13"/>
    </location>
</feature>
<comment type="function">
    <text evidence="1">Catalyzes the retro-aldol cleavage of 4-hydroxy-2-oxopentanoate to pyruvate and acetaldehyde. Is involved in the meta-cleavage pathway for the degradation of aromatic compounds.</text>
</comment>
<comment type="catalytic activity">
    <reaction evidence="1">
        <text>(S)-4-hydroxy-2-oxopentanoate = acetaldehyde + pyruvate</text>
        <dbReference type="Rhea" id="RHEA:22624"/>
        <dbReference type="ChEBI" id="CHEBI:15343"/>
        <dbReference type="ChEBI" id="CHEBI:15361"/>
        <dbReference type="ChEBI" id="CHEBI:73143"/>
        <dbReference type="EC" id="4.1.3.39"/>
    </reaction>
</comment>
<comment type="pathway">
    <text evidence="1">Aromatic compound metabolism; 3-phenylpropanoate degradation.</text>
</comment>
<comment type="subunit">
    <text evidence="1">Interacts with MhpF.</text>
</comment>
<comment type="similarity">
    <text evidence="1">Belongs to the 4-hydroxy-2-oxovalerate aldolase family.</text>
</comment>
<protein>
    <recommendedName>
        <fullName evidence="1">4-hydroxy-2-oxovalerate aldolase</fullName>
        <shortName evidence="1">HOA</shortName>
        <ecNumber evidence="1">4.1.3.39</ecNumber>
    </recommendedName>
    <alternativeName>
        <fullName evidence="1">4-hydroxy-2-keto-pentanoic acid aldolase</fullName>
    </alternativeName>
    <alternativeName>
        <fullName evidence="1">4-hydroxy-2-oxopentanoate aldolase</fullName>
    </alternativeName>
</protein>
<accession>Q6D796</accession>
<sequence length="343" mass="36890">MAKKILLCDPTLRDGNHAVRHQLTRESFAAYCQAAEAANVPVVEVGHGNGLGASSMLVGECLLSDEDIFTISREHLHKSRMAIHLIPGFCTIKKDLTRALELGVDLFRVASHCTEADITDRHIHFVRNSGKEAWGILMMSHMTSPAVLLEEARKMESYGAEAIVIMDSAGAYFPDDVKERISTLVNGLTVPVGFHGHNNLGMSVINSVVAVQEGATIIDGTIRGFGAGAGNTQLEVLVAVFERLGYETGIDLYKILDAADIAEKGFNPVAPSISPLSIVSGLAGVFSGFAKPVAKAAKDYNVDPRDIFFGLGERKAVAGQESLIYEVARDLAKRNENSVEKGQ</sequence>
<dbReference type="EC" id="4.1.3.39" evidence="1"/>
<dbReference type="EMBL" id="BX950851">
    <property type="protein sequence ID" value="CAG74339.1"/>
    <property type="molecule type" value="Genomic_DNA"/>
</dbReference>
<dbReference type="SMR" id="Q6D796"/>
<dbReference type="STRING" id="218491.ECA1429"/>
<dbReference type="KEGG" id="eca:ECA1429"/>
<dbReference type="PATRIC" id="fig|218491.5.peg.1465"/>
<dbReference type="eggNOG" id="COG0119">
    <property type="taxonomic scope" value="Bacteria"/>
</dbReference>
<dbReference type="HOGENOM" id="CLU_049173_0_0_6"/>
<dbReference type="OrthoDB" id="9803573at2"/>
<dbReference type="UniPathway" id="UPA00714"/>
<dbReference type="Proteomes" id="UP000007966">
    <property type="component" value="Chromosome"/>
</dbReference>
<dbReference type="GO" id="GO:0003852">
    <property type="term" value="F:2-isopropylmalate synthase activity"/>
    <property type="evidence" value="ECO:0007669"/>
    <property type="project" value="TreeGrafter"/>
</dbReference>
<dbReference type="GO" id="GO:0008701">
    <property type="term" value="F:4-hydroxy-2-oxovalerate aldolase activity"/>
    <property type="evidence" value="ECO:0007669"/>
    <property type="project" value="UniProtKB-UniRule"/>
</dbReference>
<dbReference type="GO" id="GO:0030145">
    <property type="term" value="F:manganese ion binding"/>
    <property type="evidence" value="ECO:0007669"/>
    <property type="project" value="UniProtKB-UniRule"/>
</dbReference>
<dbReference type="GO" id="GO:0019380">
    <property type="term" value="P:3-phenylpropionate catabolic process"/>
    <property type="evidence" value="ECO:0007669"/>
    <property type="project" value="UniProtKB-UniRule"/>
</dbReference>
<dbReference type="GO" id="GO:0009098">
    <property type="term" value="P:L-leucine biosynthetic process"/>
    <property type="evidence" value="ECO:0007669"/>
    <property type="project" value="TreeGrafter"/>
</dbReference>
<dbReference type="CDD" id="cd07943">
    <property type="entry name" value="DRE_TIM_HOA"/>
    <property type="match status" value="1"/>
</dbReference>
<dbReference type="Gene3D" id="1.10.8.60">
    <property type="match status" value="1"/>
</dbReference>
<dbReference type="Gene3D" id="3.20.20.70">
    <property type="entry name" value="Aldolase class I"/>
    <property type="match status" value="1"/>
</dbReference>
<dbReference type="HAMAP" id="MF_01656">
    <property type="entry name" value="HOA"/>
    <property type="match status" value="1"/>
</dbReference>
<dbReference type="InterPro" id="IPR050073">
    <property type="entry name" value="2-IPM_HCS-like"/>
</dbReference>
<dbReference type="InterPro" id="IPR017629">
    <property type="entry name" value="4OH_2_O-val_aldolase"/>
</dbReference>
<dbReference type="InterPro" id="IPR013785">
    <property type="entry name" value="Aldolase_TIM"/>
</dbReference>
<dbReference type="InterPro" id="IPR012425">
    <property type="entry name" value="DmpG_comm"/>
</dbReference>
<dbReference type="InterPro" id="IPR035685">
    <property type="entry name" value="DRE_TIM_HOA"/>
</dbReference>
<dbReference type="InterPro" id="IPR000891">
    <property type="entry name" value="PYR_CT"/>
</dbReference>
<dbReference type="NCBIfam" id="TIGR03217">
    <property type="entry name" value="4OH_2_O_val_ald"/>
    <property type="match status" value="1"/>
</dbReference>
<dbReference type="NCBIfam" id="NF006049">
    <property type="entry name" value="PRK08195.1"/>
    <property type="match status" value="1"/>
</dbReference>
<dbReference type="PANTHER" id="PTHR10277:SF9">
    <property type="entry name" value="2-ISOPROPYLMALATE SYNTHASE 1, CHLOROPLASTIC-RELATED"/>
    <property type="match status" value="1"/>
</dbReference>
<dbReference type="PANTHER" id="PTHR10277">
    <property type="entry name" value="HOMOCITRATE SYNTHASE-RELATED"/>
    <property type="match status" value="1"/>
</dbReference>
<dbReference type="Pfam" id="PF07836">
    <property type="entry name" value="DmpG_comm"/>
    <property type="match status" value="1"/>
</dbReference>
<dbReference type="Pfam" id="PF00682">
    <property type="entry name" value="HMGL-like"/>
    <property type="match status" value="1"/>
</dbReference>
<dbReference type="SUPFAM" id="SSF51569">
    <property type="entry name" value="Aldolase"/>
    <property type="match status" value="1"/>
</dbReference>
<dbReference type="SUPFAM" id="SSF89000">
    <property type="entry name" value="post-HMGL domain-like"/>
    <property type="match status" value="1"/>
</dbReference>
<dbReference type="PROSITE" id="PS50991">
    <property type="entry name" value="PYR_CT"/>
    <property type="match status" value="1"/>
</dbReference>
<name>HOA_PECAS</name>
<keyword id="KW-0058">Aromatic hydrocarbons catabolism</keyword>
<keyword id="KW-0456">Lyase</keyword>
<keyword id="KW-0464">Manganese</keyword>
<keyword id="KW-0479">Metal-binding</keyword>
<keyword id="KW-1185">Reference proteome</keyword>
<proteinExistence type="inferred from homology"/>
<reference key="1">
    <citation type="journal article" date="2004" name="Proc. Natl. Acad. Sci. U.S.A.">
        <title>Genome sequence of the enterobacterial phytopathogen Erwinia carotovora subsp. atroseptica and characterization of virulence factors.</title>
        <authorList>
            <person name="Bell K.S."/>
            <person name="Sebaihia M."/>
            <person name="Pritchard L."/>
            <person name="Holden M.T.G."/>
            <person name="Hyman L.J."/>
            <person name="Holeva M.C."/>
            <person name="Thomson N.R."/>
            <person name="Bentley S.D."/>
            <person name="Churcher L.J.C."/>
            <person name="Mungall K."/>
            <person name="Atkin R."/>
            <person name="Bason N."/>
            <person name="Brooks K."/>
            <person name="Chillingworth T."/>
            <person name="Clark K."/>
            <person name="Doggett J."/>
            <person name="Fraser A."/>
            <person name="Hance Z."/>
            <person name="Hauser H."/>
            <person name="Jagels K."/>
            <person name="Moule S."/>
            <person name="Norbertczak H."/>
            <person name="Ormond D."/>
            <person name="Price C."/>
            <person name="Quail M.A."/>
            <person name="Sanders M."/>
            <person name="Walker D."/>
            <person name="Whitehead S."/>
            <person name="Salmond G.P.C."/>
            <person name="Birch P.R.J."/>
            <person name="Parkhill J."/>
            <person name="Toth I.K."/>
        </authorList>
    </citation>
    <scope>NUCLEOTIDE SEQUENCE [LARGE SCALE GENOMIC DNA]</scope>
    <source>
        <strain>SCRI 1043 / ATCC BAA-672</strain>
    </source>
</reference>
<organism>
    <name type="scientific">Pectobacterium atrosepticum (strain SCRI 1043 / ATCC BAA-672)</name>
    <name type="common">Erwinia carotovora subsp. atroseptica</name>
    <dbReference type="NCBI Taxonomy" id="218491"/>
    <lineage>
        <taxon>Bacteria</taxon>
        <taxon>Pseudomonadati</taxon>
        <taxon>Pseudomonadota</taxon>
        <taxon>Gammaproteobacteria</taxon>
        <taxon>Enterobacterales</taxon>
        <taxon>Pectobacteriaceae</taxon>
        <taxon>Pectobacterium</taxon>
    </lineage>
</organism>
<evidence type="ECO:0000255" key="1">
    <source>
        <dbReference type="HAMAP-Rule" id="MF_01656"/>
    </source>
</evidence>
<gene>
    <name evidence="1" type="primary">mhpE</name>
    <name type="synonym">nahM</name>
    <name type="ordered locus">ECA1429</name>
</gene>